<proteinExistence type="inferred from homology"/>
<gene>
    <name type="primary">sodA</name>
</gene>
<feature type="chain" id="PRO_0000160090" description="Superoxide dismutase [Mn/Fe]">
    <location>
        <begin position="1" status="less than"/>
        <end position="145" status="greater than"/>
    </location>
</feature>
<feature type="binding site" evidence="1">
    <location>
        <position position="10"/>
    </location>
    <ligand>
        <name>Fe(3+)</name>
        <dbReference type="ChEBI" id="CHEBI:29034"/>
    </ligand>
</feature>
<feature type="binding site" evidence="1">
    <location>
        <position position="10"/>
    </location>
    <ligand>
        <name>Mn(2+)</name>
        <dbReference type="ChEBI" id="CHEBI:29035"/>
    </ligand>
</feature>
<feature type="binding site" evidence="1">
    <location>
        <position position="64"/>
    </location>
    <ligand>
        <name>Fe(3+)</name>
        <dbReference type="ChEBI" id="CHEBI:29034"/>
    </ligand>
</feature>
<feature type="binding site" evidence="1">
    <location>
        <position position="64"/>
    </location>
    <ligand>
        <name>Mn(2+)</name>
        <dbReference type="ChEBI" id="CHEBI:29035"/>
    </ligand>
</feature>
<feature type="non-terminal residue">
    <location>
        <position position="1"/>
    </location>
</feature>
<feature type="non-terminal residue">
    <location>
        <position position="145"/>
    </location>
</feature>
<protein>
    <recommendedName>
        <fullName>Superoxide dismutase [Mn/Fe]</fullName>
        <ecNumber evidence="1">1.15.1.1</ecNumber>
    </recommendedName>
</protein>
<reference key="1">
    <citation type="journal article" date="1998" name="J. Clin. Microbiol.">
        <title>Identification of streptococci to species level by sequencing the gene encoding the manganese-dependent superoxide dismutase.</title>
        <authorList>
            <person name="Poyart C."/>
            <person name="Quesne G."/>
            <person name="Coulon S."/>
            <person name="Berche P."/>
            <person name="Trieu-Cuot P."/>
        </authorList>
    </citation>
    <scope>NUCLEOTIDE SEQUENCE [GENOMIC DNA]</scope>
    <source>
        <strain>ATCC 43496 / CIP 103223 / DSM 20715 / LMG 15890 / STR-T1</strain>
    </source>
</reference>
<sequence>QFDAETMTLHHDKHHATYVANANAALEKHPEIGENLKELLADVTKIPADIRQALINNGGGHLNHALFWELLSPEKQEITADVAQAIDEAFGSFDAFKEQFTAAATGRFGSGWAWLVVNKEGQLEITSTANQDTPISEGKKPILAL</sequence>
<evidence type="ECO:0000250" key="1">
    <source>
        <dbReference type="UniProtKB" id="P80293"/>
    </source>
</evidence>
<evidence type="ECO:0000305" key="2"/>
<organism>
    <name type="scientific">Streptococcus canis</name>
    <dbReference type="NCBI Taxonomy" id="1329"/>
    <lineage>
        <taxon>Bacteria</taxon>
        <taxon>Bacillati</taxon>
        <taxon>Bacillota</taxon>
        <taxon>Bacilli</taxon>
        <taxon>Lactobacillales</taxon>
        <taxon>Streptococcaceae</taxon>
        <taxon>Streptococcus</taxon>
    </lineage>
</organism>
<dbReference type="EC" id="1.15.1.1" evidence="1"/>
<dbReference type="EMBL" id="Z99175">
    <property type="protein sequence ID" value="CAB16319.1"/>
    <property type="molecule type" value="Genomic_DNA"/>
</dbReference>
<dbReference type="SMR" id="O54210"/>
<dbReference type="GO" id="GO:0005737">
    <property type="term" value="C:cytoplasm"/>
    <property type="evidence" value="ECO:0007669"/>
    <property type="project" value="TreeGrafter"/>
</dbReference>
<dbReference type="GO" id="GO:0046872">
    <property type="term" value="F:metal ion binding"/>
    <property type="evidence" value="ECO:0007669"/>
    <property type="project" value="UniProtKB-KW"/>
</dbReference>
<dbReference type="GO" id="GO:0004784">
    <property type="term" value="F:superoxide dismutase activity"/>
    <property type="evidence" value="ECO:0007669"/>
    <property type="project" value="UniProtKB-EC"/>
</dbReference>
<dbReference type="FunFam" id="1.10.287.990:FF:000001">
    <property type="entry name" value="Superoxide dismutase"/>
    <property type="match status" value="1"/>
</dbReference>
<dbReference type="Gene3D" id="1.10.287.990">
    <property type="entry name" value="Fe,Mn superoxide dismutase (SOD) domain"/>
    <property type="match status" value="1"/>
</dbReference>
<dbReference type="Gene3D" id="3.55.40.20">
    <property type="entry name" value="Iron/manganese superoxide dismutase, C-terminal domain"/>
    <property type="match status" value="1"/>
</dbReference>
<dbReference type="InterPro" id="IPR001189">
    <property type="entry name" value="Mn/Fe_SOD"/>
</dbReference>
<dbReference type="InterPro" id="IPR019832">
    <property type="entry name" value="Mn/Fe_SOD_C"/>
</dbReference>
<dbReference type="InterPro" id="IPR019831">
    <property type="entry name" value="Mn/Fe_SOD_N"/>
</dbReference>
<dbReference type="InterPro" id="IPR036324">
    <property type="entry name" value="Mn/Fe_SOD_N_sf"/>
</dbReference>
<dbReference type="InterPro" id="IPR036314">
    <property type="entry name" value="SOD_C_sf"/>
</dbReference>
<dbReference type="PANTHER" id="PTHR43595">
    <property type="entry name" value="37S RIBOSOMAL PROTEIN S26, MITOCHONDRIAL"/>
    <property type="match status" value="1"/>
</dbReference>
<dbReference type="PANTHER" id="PTHR43595:SF2">
    <property type="entry name" value="SMALL RIBOSOMAL SUBUNIT PROTEIN MS42"/>
    <property type="match status" value="1"/>
</dbReference>
<dbReference type="Pfam" id="PF02777">
    <property type="entry name" value="Sod_Fe_C"/>
    <property type="match status" value="1"/>
</dbReference>
<dbReference type="Pfam" id="PF00081">
    <property type="entry name" value="Sod_Fe_N"/>
    <property type="match status" value="1"/>
</dbReference>
<dbReference type="PRINTS" id="PR01703">
    <property type="entry name" value="MNSODISMTASE"/>
</dbReference>
<dbReference type="SUPFAM" id="SSF54719">
    <property type="entry name" value="Fe,Mn superoxide dismutase (SOD), C-terminal domain"/>
    <property type="match status" value="1"/>
</dbReference>
<dbReference type="SUPFAM" id="SSF46609">
    <property type="entry name" value="Fe,Mn superoxide dismutase (SOD), N-terminal domain"/>
    <property type="match status" value="1"/>
</dbReference>
<name>SODM_STRCB</name>
<keyword id="KW-0408">Iron</keyword>
<keyword id="KW-0464">Manganese</keyword>
<keyword id="KW-0479">Metal-binding</keyword>
<keyword id="KW-0560">Oxidoreductase</keyword>
<comment type="function">
    <text evidence="1">Destroys superoxide anion radicals which are normally produced within the cells and which are toxic to biological systems. Catalyzes the dismutation of superoxide anion radicals into O2 and H2O2 by successive reduction and oxidation of the transition metal ion at the active site.</text>
</comment>
<comment type="catalytic activity">
    <reaction evidence="1">
        <text>2 superoxide + 2 H(+) = H2O2 + O2</text>
        <dbReference type="Rhea" id="RHEA:20696"/>
        <dbReference type="ChEBI" id="CHEBI:15378"/>
        <dbReference type="ChEBI" id="CHEBI:15379"/>
        <dbReference type="ChEBI" id="CHEBI:16240"/>
        <dbReference type="ChEBI" id="CHEBI:18421"/>
        <dbReference type="EC" id="1.15.1.1"/>
    </reaction>
    <physiologicalReaction direction="left-to-right" evidence="1">
        <dbReference type="Rhea" id="RHEA:20697"/>
    </physiologicalReaction>
</comment>
<comment type="cofactor">
    <cofactor evidence="1">
        <name>Mn(2+)</name>
        <dbReference type="ChEBI" id="CHEBI:29035"/>
    </cofactor>
    <cofactor evidence="1">
        <name>Fe(3+)</name>
        <dbReference type="ChEBI" id="CHEBI:29034"/>
    </cofactor>
    <text evidence="1">Binds 1 Mn(2+) or Fe(3+) ion per subunit.</text>
</comment>
<comment type="similarity">
    <text evidence="2">Belongs to the iron/manganese superoxide dismutase family.</text>
</comment>
<accession>O54210</accession>